<keyword id="KW-0285">Flavoprotein</keyword>
<keyword id="KW-0288">FMN</keyword>
<keyword id="KW-0560">Oxidoreductase</keyword>
<keyword id="KW-0664">Pyridoxine biosynthesis</keyword>
<proteinExistence type="inferred from homology"/>
<feature type="chain" id="PRO_0000335791" description="Pyridoxine/pyridoxamine 5'-phosphate oxidase">
    <location>
        <begin position="1"/>
        <end position="218"/>
    </location>
</feature>
<feature type="binding site" evidence="1">
    <location>
        <begin position="11"/>
        <end position="14"/>
    </location>
    <ligand>
        <name>substrate</name>
    </ligand>
</feature>
<feature type="binding site" evidence="1">
    <location>
        <begin position="70"/>
        <end position="75"/>
    </location>
    <ligand>
        <name>FMN</name>
        <dbReference type="ChEBI" id="CHEBI:58210"/>
    </ligand>
</feature>
<feature type="binding site" evidence="1">
    <location>
        <position position="75"/>
    </location>
    <ligand>
        <name>substrate</name>
    </ligand>
</feature>
<feature type="binding site" evidence="1">
    <location>
        <begin position="85"/>
        <end position="86"/>
    </location>
    <ligand>
        <name>FMN</name>
        <dbReference type="ChEBI" id="CHEBI:58210"/>
    </ligand>
</feature>
<feature type="binding site" evidence="1">
    <location>
        <position position="92"/>
    </location>
    <ligand>
        <name>FMN</name>
        <dbReference type="ChEBI" id="CHEBI:58210"/>
    </ligand>
</feature>
<feature type="binding site" evidence="1">
    <location>
        <position position="114"/>
    </location>
    <ligand>
        <name>FMN</name>
        <dbReference type="ChEBI" id="CHEBI:58210"/>
    </ligand>
</feature>
<feature type="binding site" evidence="1">
    <location>
        <position position="132"/>
    </location>
    <ligand>
        <name>substrate</name>
    </ligand>
</feature>
<feature type="binding site" evidence="1">
    <location>
        <position position="136"/>
    </location>
    <ligand>
        <name>substrate</name>
    </ligand>
</feature>
<feature type="binding site" evidence="1">
    <location>
        <position position="140"/>
    </location>
    <ligand>
        <name>substrate</name>
    </ligand>
</feature>
<feature type="binding site" evidence="1">
    <location>
        <begin position="149"/>
        <end position="150"/>
    </location>
    <ligand>
        <name>FMN</name>
        <dbReference type="ChEBI" id="CHEBI:58210"/>
    </ligand>
</feature>
<feature type="binding site" evidence="1">
    <location>
        <position position="195"/>
    </location>
    <ligand>
        <name>FMN</name>
        <dbReference type="ChEBI" id="CHEBI:58210"/>
    </ligand>
</feature>
<feature type="binding site" evidence="1">
    <location>
        <begin position="201"/>
        <end position="203"/>
    </location>
    <ligand>
        <name>substrate</name>
    </ligand>
</feature>
<feature type="binding site" evidence="1">
    <location>
        <position position="205"/>
    </location>
    <ligand>
        <name>FMN</name>
        <dbReference type="ChEBI" id="CHEBI:58210"/>
    </ligand>
</feature>
<organism>
    <name type="scientific">Mycolicibacterium gilvum (strain PYR-GCK)</name>
    <name type="common">Mycobacterium gilvum (strain PYR-GCK)</name>
    <dbReference type="NCBI Taxonomy" id="350054"/>
    <lineage>
        <taxon>Bacteria</taxon>
        <taxon>Bacillati</taxon>
        <taxon>Actinomycetota</taxon>
        <taxon>Actinomycetes</taxon>
        <taxon>Mycobacteriales</taxon>
        <taxon>Mycobacteriaceae</taxon>
        <taxon>Mycolicibacterium</taxon>
    </lineage>
</organism>
<name>PDXH_MYCGI</name>
<dbReference type="EC" id="1.4.3.5" evidence="1"/>
<dbReference type="EMBL" id="CP000656">
    <property type="protein sequence ID" value="ABP44207.1"/>
    <property type="molecule type" value="Genomic_DNA"/>
</dbReference>
<dbReference type="SMR" id="A4T792"/>
<dbReference type="STRING" id="350054.Mflv_1727"/>
<dbReference type="KEGG" id="mgi:Mflv_1727"/>
<dbReference type="eggNOG" id="COG0259">
    <property type="taxonomic scope" value="Bacteria"/>
</dbReference>
<dbReference type="HOGENOM" id="CLU_032263_2_2_11"/>
<dbReference type="UniPathway" id="UPA01068">
    <property type="reaction ID" value="UER00304"/>
</dbReference>
<dbReference type="UniPathway" id="UPA01068">
    <property type="reaction ID" value="UER00305"/>
</dbReference>
<dbReference type="GO" id="GO:0010181">
    <property type="term" value="F:FMN binding"/>
    <property type="evidence" value="ECO:0007669"/>
    <property type="project" value="UniProtKB-UniRule"/>
</dbReference>
<dbReference type="GO" id="GO:0004733">
    <property type="term" value="F:pyridoxamine phosphate oxidase activity"/>
    <property type="evidence" value="ECO:0007669"/>
    <property type="project" value="UniProtKB-UniRule"/>
</dbReference>
<dbReference type="GO" id="GO:0008615">
    <property type="term" value="P:pyridoxine biosynthetic process"/>
    <property type="evidence" value="ECO:0007669"/>
    <property type="project" value="UniProtKB-KW"/>
</dbReference>
<dbReference type="Gene3D" id="2.30.110.10">
    <property type="entry name" value="Electron Transport, Fmn-binding Protein, Chain A"/>
    <property type="match status" value="1"/>
</dbReference>
<dbReference type="HAMAP" id="MF_01629">
    <property type="entry name" value="PdxH"/>
    <property type="match status" value="1"/>
</dbReference>
<dbReference type="InterPro" id="IPR000659">
    <property type="entry name" value="Pyridox_Oxase"/>
</dbReference>
<dbReference type="InterPro" id="IPR019740">
    <property type="entry name" value="Pyridox_Oxase_CS"/>
</dbReference>
<dbReference type="InterPro" id="IPR011576">
    <property type="entry name" value="Pyridox_Oxase_N"/>
</dbReference>
<dbReference type="InterPro" id="IPR019576">
    <property type="entry name" value="Pyridoxamine_oxidase_dimer_C"/>
</dbReference>
<dbReference type="InterPro" id="IPR012349">
    <property type="entry name" value="Split_barrel_FMN-bd"/>
</dbReference>
<dbReference type="NCBIfam" id="TIGR00558">
    <property type="entry name" value="pdxH"/>
    <property type="match status" value="1"/>
</dbReference>
<dbReference type="NCBIfam" id="NF004231">
    <property type="entry name" value="PRK05679.1"/>
    <property type="match status" value="1"/>
</dbReference>
<dbReference type="PANTHER" id="PTHR10851:SF0">
    <property type="entry name" value="PYRIDOXINE-5'-PHOSPHATE OXIDASE"/>
    <property type="match status" value="1"/>
</dbReference>
<dbReference type="PANTHER" id="PTHR10851">
    <property type="entry name" value="PYRIDOXINE-5-PHOSPHATE OXIDASE"/>
    <property type="match status" value="1"/>
</dbReference>
<dbReference type="Pfam" id="PF10590">
    <property type="entry name" value="PNP_phzG_C"/>
    <property type="match status" value="1"/>
</dbReference>
<dbReference type="Pfam" id="PF01243">
    <property type="entry name" value="PNPOx_N"/>
    <property type="match status" value="1"/>
</dbReference>
<dbReference type="PIRSF" id="PIRSF000190">
    <property type="entry name" value="Pyd_amn-ph_oxd"/>
    <property type="match status" value="1"/>
</dbReference>
<dbReference type="SUPFAM" id="SSF50475">
    <property type="entry name" value="FMN-binding split barrel"/>
    <property type="match status" value="1"/>
</dbReference>
<dbReference type="PROSITE" id="PS01064">
    <property type="entry name" value="PYRIDOX_OXIDASE"/>
    <property type="match status" value="1"/>
</dbReference>
<protein>
    <recommendedName>
        <fullName evidence="1">Pyridoxine/pyridoxamine 5'-phosphate oxidase</fullName>
        <ecNumber evidence="1">1.4.3.5</ecNumber>
    </recommendedName>
    <alternativeName>
        <fullName evidence="1">PNP/PMP oxidase</fullName>
        <shortName evidence="1">PNPOx</shortName>
    </alternativeName>
    <alternativeName>
        <fullName evidence="1">Pyridoxal 5'-phosphate synthase</fullName>
    </alternativeName>
</protein>
<comment type="function">
    <text evidence="1">Catalyzes the oxidation of either pyridoxine 5'-phosphate (PNP) or pyridoxamine 5'-phosphate (PMP) into pyridoxal 5'-phosphate (PLP).</text>
</comment>
<comment type="catalytic activity">
    <reaction evidence="1">
        <text>pyridoxamine 5'-phosphate + O2 + H2O = pyridoxal 5'-phosphate + H2O2 + NH4(+)</text>
        <dbReference type="Rhea" id="RHEA:15817"/>
        <dbReference type="ChEBI" id="CHEBI:15377"/>
        <dbReference type="ChEBI" id="CHEBI:15379"/>
        <dbReference type="ChEBI" id="CHEBI:16240"/>
        <dbReference type="ChEBI" id="CHEBI:28938"/>
        <dbReference type="ChEBI" id="CHEBI:58451"/>
        <dbReference type="ChEBI" id="CHEBI:597326"/>
        <dbReference type="EC" id="1.4.3.5"/>
    </reaction>
</comment>
<comment type="catalytic activity">
    <reaction evidence="1">
        <text>pyridoxine 5'-phosphate + O2 = pyridoxal 5'-phosphate + H2O2</text>
        <dbReference type="Rhea" id="RHEA:15149"/>
        <dbReference type="ChEBI" id="CHEBI:15379"/>
        <dbReference type="ChEBI" id="CHEBI:16240"/>
        <dbReference type="ChEBI" id="CHEBI:58589"/>
        <dbReference type="ChEBI" id="CHEBI:597326"/>
        <dbReference type="EC" id="1.4.3.5"/>
    </reaction>
</comment>
<comment type="cofactor">
    <cofactor evidence="1">
        <name>FMN</name>
        <dbReference type="ChEBI" id="CHEBI:58210"/>
    </cofactor>
    <text evidence="1">Binds 1 FMN per subunit.</text>
</comment>
<comment type="pathway">
    <text evidence="1">Cofactor metabolism; pyridoxal 5'-phosphate salvage; pyridoxal 5'-phosphate from pyridoxamine 5'-phosphate: step 1/1.</text>
</comment>
<comment type="pathway">
    <text evidence="1">Cofactor metabolism; pyridoxal 5'-phosphate salvage; pyridoxal 5'-phosphate from pyridoxine 5'-phosphate: step 1/1.</text>
</comment>
<comment type="subunit">
    <text evidence="1">Homodimer.</text>
</comment>
<comment type="similarity">
    <text evidence="1">Belongs to the pyridoxamine 5'-phosphate oxidase family.</text>
</comment>
<reference key="1">
    <citation type="submission" date="2007-04" db="EMBL/GenBank/DDBJ databases">
        <title>Complete sequence of chromosome of Mycobacterium gilvum PYR-GCK.</title>
        <authorList>
            <consortium name="US DOE Joint Genome Institute"/>
            <person name="Copeland A."/>
            <person name="Lucas S."/>
            <person name="Lapidus A."/>
            <person name="Barry K."/>
            <person name="Detter J.C."/>
            <person name="Glavina del Rio T."/>
            <person name="Hammon N."/>
            <person name="Israni S."/>
            <person name="Dalin E."/>
            <person name="Tice H."/>
            <person name="Pitluck S."/>
            <person name="Chain P."/>
            <person name="Malfatti S."/>
            <person name="Shin M."/>
            <person name="Vergez L."/>
            <person name="Schmutz J."/>
            <person name="Larimer F."/>
            <person name="Land M."/>
            <person name="Hauser L."/>
            <person name="Kyrpides N."/>
            <person name="Mikhailova N."/>
            <person name="Miller C."/>
            <person name="Richardson P."/>
        </authorList>
    </citation>
    <scope>NUCLEOTIDE SEQUENCE [LARGE SCALE GENOMIC DNA]</scope>
    <source>
        <strain>PYR-GCK</strain>
    </source>
</reference>
<evidence type="ECO:0000255" key="1">
    <source>
        <dbReference type="HAMAP-Rule" id="MF_01629"/>
    </source>
</evidence>
<sequence length="218" mass="24212">MATSDHLARMRVEYGSAEKDGSVDLDADWLDIGWVALLNQWMTEAHDAGVAEPNAMVVATIDGEGRPVTRTVLCKSVDESGISFYTNYDSDKGAQLAARPYASATFPWYLLGRQVHVRGRVTKVSAEETADYWSKRPRGSQLGAWASQQSRPIASRAALMQQLADVTARFADVDEVPVPPHWGGYLIAAEVVEFWQGRENRVHNRIRVRDGAVERLQP</sequence>
<gene>
    <name evidence="1" type="primary">pdxH</name>
    <name type="ordered locus">Mflv_1727</name>
</gene>
<accession>A4T792</accession>